<name>LPXK_MARMM</name>
<accession>Q0AS12</accession>
<sequence>MKEPAFWRTDGGRGSGALARALLAPLGWIHAWAVARRIRKATPVRIGPKVVCVGNLTVGGTGKTPVTQTLMQRLAEMDLTAASLSRGYGGREAGPLRIDPATHDASTVGDEPLLLARTGQAWIARDRAAGGRAIEAAGGVDLVLMDDGHQNPDLAKDCSIVVVDGLTGWGPGTIVPAGPLREPVATGLARADAVIVMMPDAATEPDWTGLGLSDLSIPVFHAWLEPLAPPPAGKLVAFAGIGRPEKFFDALRAAGGDIGEVAVYGDHHAFNAGDLRHLDALAAAHDAQLITTEKDWVRLPVDIQARVTAWPVRAVFANPGALDGLLRDVMDADMDAGGEAG</sequence>
<keyword id="KW-0067">ATP-binding</keyword>
<keyword id="KW-0418">Kinase</keyword>
<keyword id="KW-0441">Lipid A biosynthesis</keyword>
<keyword id="KW-0444">Lipid biosynthesis</keyword>
<keyword id="KW-0443">Lipid metabolism</keyword>
<keyword id="KW-0547">Nucleotide-binding</keyword>
<keyword id="KW-1185">Reference proteome</keyword>
<keyword id="KW-0808">Transferase</keyword>
<gene>
    <name evidence="1" type="primary">lpxK</name>
    <name type="ordered locus">Mmar10_0632</name>
</gene>
<evidence type="ECO:0000255" key="1">
    <source>
        <dbReference type="HAMAP-Rule" id="MF_00409"/>
    </source>
</evidence>
<comment type="function">
    <text evidence="1">Transfers the gamma-phosphate of ATP to the 4'-position of a tetraacyldisaccharide 1-phosphate intermediate (termed DS-1-P) to form tetraacyldisaccharide 1,4'-bis-phosphate (lipid IVA).</text>
</comment>
<comment type="catalytic activity">
    <reaction evidence="1">
        <text>a lipid A disaccharide + ATP = a lipid IVA + ADP + H(+)</text>
        <dbReference type="Rhea" id="RHEA:67840"/>
        <dbReference type="ChEBI" id="CHEBI:15378"/>
        <dbReference type="ChEBI" id="CHEBI:30616"/>
        <dbReference type="ChEBI" id="CHEBI:176343"/>
        <dbReference type="ChEBI" id="CHEBI:176425"/>
        <dbReference type="ChEBI" id="CHEBI:456216"/>
        <dbReference type="EC" id="2.7.1.130"/>
    </reaction>
</comment>
<comment type="pathway">
    <text evidence="1">Glycolipid biosynthesis; lipid IV(A) biosynthesis; lipid IV(A) from (3R)-3-hydroxytetradecanoyl-[acyl-carrier-protein] and UDP-N-acetyl-alpha-D-glucosamine: step 6/6.</text>
</comment>
<comment type="similarity">
    <text evidence="1">Belongs to the LpxK family.</text>
</comment>
<feature type="chain" id="PRO_0000340840" description="Tetraacyldisaccharide 4'-kinase">
    <location>
        <begin position="1"/>
        <end position="341"/>
    </location>
</feature>
<feature type="binding site" evidence="1">
    <location>
        <begin position="57"/>
        <end position="64"/>
    </location>
    <ligand>
        <name>ATP</name>
        <dbReference type="ChEBI" id="CHEBI:30616"/>
    </ligand>
</feature>
<dbReference type="EC" id="2.7.1.130" evidence="1"/>
<dbReference type="EMBL" id="CP000449">
    <property type="protein sequence ID" value="ABI64925.1"/>
    <property type="molecule type" value="Genomic_DNA"/>
</dbReference>
<dbReference type="RefSeq" id="WP_011642572.1">
    <property type="nucleotide sequence ID" value="NC_008347.1"/>
</dbReference>
<dbReference type="SMR" id="Q0AS12"/>
<dbReference type="STRING" id="394221.Mmar10_0632"/>
<dbReference type="KEGG" id="mmr:Mmar10_0632"/>
<dbReference type="eggNOG" id="COG1663">
    <property type="taxonomic scope" value="Bacteria"/>
</dbReference>
<dbReference type="HOGENOM" id="CLU_038816_0_0_5"/>
<dbReference type="OrthoDB" id="9766423at2"/>
<dbReference type="UniPathway" id="UPA00359">
    <property type="reaction ID" value="UER00482"/>
</dbReference>
<dbReference type="Proteomes" id="UP000001964">
    <property type="component" value="Chromosome"/>
</dbReference>
<dbReference type="GO" id="GO:0005886">
    <property type="term" value="C:plasma membrane"/>
    <property type="evidence" value="ECO:0007669"/>
    <property type="project" value="TreeGrafter"/>
</dbReference>
<dbReference type="GO" id="GO:0005524">
    <property type="term" value="F:ATP binding"/>
    <property type="evidence" value="ECO:0007669"/>
    <property type="project" value="UniProtKB-UniRule"/>
</dbReference>
<dbReference type="GO" id="GO:0009029">
    <property type="term" value="F:tetraacyldisaccharide 4'-kinase activity"/>
    <property type="evidence" value="ECO:0007669"/>
    <property type="project" value="UniProtKB-UniRule"/>
</dbReference>
<dbReference type="GO" id="GO:0009245">
    <property type="term" value="P:lipid A biosynthetic process"/>
    <property type="evidence" value="ECO:0007669"/>
    <property type="project" value="UniProtKB-UniRule"/>
</dbReference>
<dbReference type="GO" id="GO:0009244">
    <property type="term" value="P:lipopolysaccharide core region biosynthetic process"/>
    <property type="evidence" value="ECO:0007669"/>
    <property type="project" value="TreeGrafter"/>
</dbReference>
<dbReference type="HAMAP" id="MF_00409">
    <property type="entry name" value="LpxK"/>
    <property type="match status" value="1"/>
</dbReference>
<dbReference type="InterPro" id="IPR003758">
    <property type="entry name" value="LpxK"/>
</dbReference>
<dbReference type="InterPro" id="IPR027417">
    <property type="entry name" value="P-loop_NTPase"/>
</dbReference>
<dbReference type="NCBIfam" id="TIGR00682">
    <property type="entry name" value="lpxK"/>
    <property type="match status" value="1"/>
</dbReference>
<dbReference type="PANTHER" id="PTHR42724">
    <property type="entry name" value="TETRAACYLDISACCHARIDE 4'-KINASE"/>
    <property type="match status" value="1"/>
</dbReference>
<dbReference type="PANTHER" id="PTHR42724:SF1">
    <property type="entry name" value="TETRAACYLDISACCHARIDE 4'-KINASE, MITOCHONDRIAL-RELATED"/>
    <property type="match status" value="1"/>
</dbReference>
<dbReference type="Pfam" id="PF02606">
    <property type="entry name" value="LpxK"/>
    <property type="match status" value="1"/>
</dbReference>
<dbReference type="SUPFAM" id="SSF52540">
    <property type="entry name" value="P-loop containing nucleoside triphosphate hydrolases"/>
    <property type="match status" value="1"/>
</dbReference>
<reference key="1">
    <citation type="submission" date="2006-08" db="EMBL/GenBank/DDBJ databases">
        <title>Complete sequence of Maricaulis maris MCS10.</title>
        <authorList>
            <consortium name="US DOE Joint Genome Institute"/>
            <person name="Copeland A."/>
            <person name="Lucas S."/>
            <person name="Lapidus A."/>
            <person name="Barry K."/>
            <person name="Detter J.C."/>
            <person name="Glavina del Rio T."/>
            <person name="Hammon N."/>
            <person name="Israni S."/>
            <person name="Dalin E."/>
            <person name="Tice H."/>
            <person name="Pitluck S."/>
            <person name="Saunders E."/>
            <person name="Brettin T."/>
            <person name="Bruce D."/>
            <person name="Han C."/>
            <person name="Tapia R."/>
            <person name="Gilna P."/>
            <person name="Schmutz J."/>
            <person name="Larimer F."/>
            <person name="Land M."/>
            <person name="Hauser L."/>
            <person name="Kyrpides N."/>
            <person name="Mikhailova N."/>
            <person name="Viollier P."/>
            <person name="Stephens C."/>
            <person name="Richardson P."/>
        </authorList>
    </citation>
    <scope>NUCLEOTIDE SEQUENCE [LARGE SCALE GENOMIC DNA]</scope>
    <source>
        <strain>MCS10</strain>
    </source>
</reference>
<proteinExistence type="inferred from homology"/>
<organism>
    <name type="scientific">Maricaulis maris (strain MCS10)</name>
    <name type="common">Caulobacter maris</name>
    <dbReference type="NCBI Taxonomy" id="394221"/>
    <lineage>
        <taxon>Bacteria</taxon>
        <taxon>Pseudomonadati</taxon>
        <taxon>Pseudomonadota</taxon>
        <taxon>Alphaproteobacteria</taxon>
        <taxon>Maricaulales</taxon>
        <taxon>Maricaulaceae</taxon>
        <taxon>Maricaulis</taxon>
    </lineage>
</organism>
<protein>
    <recommendedName>
        <fullName evidence="1">Tetraacyldisaccharide 4'-kinase</fullName>
        <ecNumber evidence="1">2.7.1.130</ecNumber>
    </recommendedName>
    <alternativeName>
        <fullName evidence="1">Lipid A 4'-kinase</fullName>
    </alternativeName>
</protein>